<evidence type="ECO:0000250" key="1"/>
<evidence type="ECO:0000255" key="2"/>
<evidence type="ECO:0000305" key="3"/>
<keyword id="KW-0975">Bacterial flagellum</keyword>
<keyword id="KW-0998">Cell outer membrane</keyword>
<keyword id="KW-0449">Lipoprotein</keyword>
<keyword id="KW-0472">Membrane</keyword>
<keyword id="KW-0564">Palmitate</keyword>
<keyword id="KW-1185">Reference proteome</keyword>
<keyword id="KW-0732">Signal</keyword>
<comment type="function">
    <text evidence="1">Assembles around the rod to form the L-ring and probably protects the motor/basal body from shearing forces during rotation.</text>
</comment>
<comment type="subunit">
    <text evidence="1">The basal body constitutes a major portion of the flagellar organelle and consists of four rings (L,P,S, and M) mounted on a central rod.</text>
</comment>
<comment type="subcellular location">
    <subcellularLocation>
        <location evidence="1">Cell outer membrane</location>
        <topology evidence="1">Lipid-anchor</topology>
    </subcellularLocation>
    <subcellularLocation>
        <location evidence="1">Bacterial flagellum basal body</location>
    </subcellularLocation>
</comment>
<comment type="similarity">
    <text evidence="3">Belongs to the FlgH family.</text>
</comment>
<dbReference type="EMBL" id="U00096">
    <property type="protein sequence ID" value="AAC74163.1"/>
    <property type="molecule type" value="Genomic_DNA"/>
</dbReference>
<dbReference type="EMBL" id="AP009048">
    <property type="protein sequence ID" value="BAA35888.2"/>
    <property type="molecule type" value="Genomic_DNA"/>
</dbReference>
<dbReference type="PIR" id="D64851">
    <property type="entry name" value="D64851"/>
</dbReference>
<dbReference type="RefSeq" id="NP_415597.1">
    <property type="nucleotide sequence ID" value="NC_000913.3"/>
</dbReference>
<dbReference type="RefSeq" id="WP_001295442.1">
    <property type="nucleotide sequence ID" value="NZ_STEB01000016.1"/>
</dbReference>
<dbReference type="SMR" id="P0A6S0"/>
<dbReference type="BioGRID" id="4261033">
    <property type="interactions" value="6"/>
</dbReference>
<dbReference type="FunCoup" id="P0A6S0">
    <property type="interactions" value="105"/>
</dbReference>
<dbReference type="IntAct" id="P0A6S0">
    <property type="interactions" value="13"/>
</dbReference>
<dbReference type="STRING" id="511145.b1079"/>
<dbReference type="jPOST" id="P0A6S0"/>
<dbReference type="PaxDb" id="511145-b1079"/>
<dbReference type="EnsemblBacteria" id="AAC74163">
    <property type="protein sequence ID" value="AAC74163"/>
    <property type="gene ID" value="b1079"/>
</dbReference>
<dbReference type="GeneID" id="93776328"/>
<dbReference type="GeneID" id="946996"/>
<dbReference type="KEGG" id="ecj:JW5153"/>
<dbReference type="KEGG" id="eco:b1079"/>
<dbReference type="KEGG" id="ecoc:C3026_06540"/>
<dbReference type="PATRIC" id="fig|1411691.4.peg.1189"/>
<dbReference type="EchoBASE" id="EB4161"/>
<dbReference type="eggNOG" id="COG2063">
    <property type="taxonomic scope" value="Bacteria"/>
</dbReference>
<dbReference type="HOGENOM" id="CLU_069313_0_0_6"/>
<dbReference type="InParanoid" id="P0A6S0"/>
<dbReference type="OMA" id="WFDRFFL"/>
<dbReference type="OrthoDB" id="9789463at2"/>
<dbReference type="PhylomeDB" id="P0A6S0"/>
<dbReference type="BioCyc" id="EcoCyc:FLGH-FLAGELLAR-L-RING"/>
<dbReference type="PRO" id="PR:P0A6S0"/>
<dbReference type="Proteomes" id="UP000000625">
    <property type="component" value="Chromosome"/>
</dbReference>
<dbReference type="GO" id="GO:0009427">
    <property type="term" value="C:bacterial-type flagellum basal body, distal rod, L ring"/>
    <property type="evidence" value="ECO:0007669"/>
    <property type="project" value="InterPro"/>
</dbReference>
<dbReference type="GO" id="GO:0009279">
    <property type="term" value="C:cell outer membrane"/>
    <property type="evidence" value="ECO:0007669"/>
    <property type="project" value="UniProtKB-SubCell"/>
</dbReference>
<dbReference type="GO" id="GO:0003774">
    <property type="term" value="F:cytoskeletal motor activity"/>
    <property type="evidence" value="ECO:0007669"/>
    <property type="project" value="InterPro"/>
</dbReference>
<dbReference type="GO" id="GO:0071973">
    <property type="term" value="P:bacterial-type flagellum-dependent cell motility"/>
    <property type="evidence" value="ECO:0007669"/>
    <property type="project" value="InterPro"/>
</dbReference>
<dbReference type="GO" id="GO:0006970">
    <property type="term" value="P:response to osmotic stress"/>
    <property type="evidence" value="ECO:0000315"/>
    <property type="project" value="EcoCyc"/>
</dbReference>
<dbReference type="HAMAP" id="MF_00415">
    <property type="entry name" value="FlgH"/>
    <property type="match status" value="1"/>
</dbReference>
<dbReference type="InterPro" id="IPR000527">
    <property type="entry name" value="Flag_Lring"/>
</dbReference>
<dbReference type="NCBIfam" id="NF001301">
    <property type="entry name" value="PRK00249.1-1"/>
    <property type="match status" value="1"/>
</dbReference>
<dbReference type="PANTHER" id="PTHR34933">
    <property type="entry name" value="FLAGELLAR L-RING PROTEIN"/>
    <property type="match status" value="1"/>
</dbReference>
<dbReference type="PANTHER" id="PTHR34933:SF3">
    <property type="entry name" value="FLAGELLAR L-RING PROTEIN"/>
    <property type="match status" value="1"/>
</dbReference>
<dbReference type="Pfam" id="PF02107">
    <property type="entry name" value="FlgH"/>
    <property type="match status" value="1"/>
</dbReference>
<dbReference type="PRINTS" id="PR01008">
    <property type="entry name" value="FLGLRINGFLGH"/>
</dbReference>
<dbReference type="PROSITE" id="PS51257">
    <property type="entry name" value="PROKAR_LIPOPROTEIN"/>
    <property type="match status" value="1"/>
</dbReference>
<protein>
    <recommendedName>
        <fullName>Flagellar L-ring protein</fullName>
    </recommendedName>
    <alternativeName>
        <fullName>Basal body L-ring protein</fullName>
    </alternativeName>
</protein>
<reference key="1">
    <citation type="journal article" date="1996" name="DNA Res.">
        <title>A 718-kb DNA sequence of the Escherichia coli K-12 genome corresponding to the 12.7-28.0 min region on the linkage map.</title>
        <authorList>
            <person name="Oshima T."/>
            <person name="Aiba H."/>
            <person name="Baba T."/>
            <person name="Fujita K."/>
            <person name="Hayashi K."/>
            <person name="Honjo A."/>
            <person name="Ikemoto K."/>
            <person name="Inada T."/>
            <person name="Itoh T."/>
            <person name="Kajihara M."/>
            <person name="Kanai K."/>
            <person name="Kashimoto K."/>
            <person name="Kimura S."/>
            <person name="Kitagawa M."/>
            <person name="Makino K."/>
            <person name="Masuda S."/>
            <person name="Miki T."/>
            <person name="Mizobuchi K."/>
            <person name="Mori H."/>
            <person name="Motomura K."/>
            <person name="Nakamura Y."/>
            <person name="Nashimoto H."/>
            <person name="Nishio Y."/>
            <person name="Saito N."/>
            <person name="Sampei G."/>
            <person name="Seki Y."/>
            <person name="Tagami H."/>
            <person name="Takemoto K."/>
            <person name="Wada C."/>
            <person name="Yamamoto Y."/>
            <person name="Yano M."/>
            <person name="Horiuchi T."/>
        </authorList>
    </citation>
    <scope>NUCLEOTIDE SEQUENCE [LARGE SCALE GENOMIC DNA]</scope>
    <source>
        <strain>K12 / W3110 / ATCC 27325 / DSM 5911</strain>
    </source>
</reference>
<reference key="2">
    <citation type="journal article" date="1997" name="Science">
        <title>The complete genome sequence of Escherichia coli K-12.</title>
        <authorList>
            <person name="Blattner F.R."/>
            <person name="Plunkett G. III"/>
            <person name="Bloch C.A."/>
            <person name="Perna N.T."/>
            <person name="Burland V."/>
            <person name="Riley M."/>
            <person name="Collado-Vides J."/>
            <person name="Glasner J.D."/>
            <person name="Rode C.K."/>
            <person name="Mayhew G.F."/>
            <person name="Gregor J."/>
            <person name="Davis N.W."/>
            <person name="Kirkpatrick H.A."/>
            <person name="Goeden M.A."/>
            <person name="Rose D.J."/>
            <person name="Mau B."/>
            <person name="Shao Y."/>
        </authorList>
    </citation>
    <scope>NUCLEOTIDE SEQUENCE [LARGE SCALE GENOMIC DNA]</scope>
    <source>
        <strain>K12 / MG1655 / ATCC 47076</strain>
    </source>
</reference>
<reference key="3">
    <citation type="journal article" date="2006" name="Mol. Syst. Biol.">
        <title>Highly accurate genome sequences of Escherichia coli K-12 strains MG1655 and W3110.</title>
        <authorList>
            <person name="Hayashi K."/>
            <person name="Morooka N."/>
            <person name="Yamamoto Y."/>
            <person name="Fujita K."/>
            <person name="Isono K."/>
            <person name="Choi S."/>
            <person name="Ohtsubo E."/>
            <person name="Baba T."/>
            <person name="Wanner B.L."/>
            <person name="Mori H."/>
            <person name="Horiuchi T."/>
        </authorList>
    </citation>
    <scope>NUCLEOTIDE SEQUENCE [LARGE SCALE GENOMIC DNA]</scope>
    <source>
        <strain>K12 / W3110 / ATCC 27325 / DSM 5911</strain>
    </source>
</reference>
<accession>P0A6S0</accession>
<accession>P75940</accession>
<accession>Q9R7P0</accession>
<sequence length="232" mass="24615">MQKNAAHTYAISSLLVLSLTGCAWIPSTPLVQGATSAQPVPGPTPVANGSIFQSAQPINYGYQPLFEDRRPRNIGDTLTIVLQENVSASKSSSANASRDGKTNFGFDTVPRYLQGLFGNARADVEASGGNTFNGKGGANASNTFSGTLTVTVDQVLVNGNLHVVGEKQIAINQGTEFIRFSGVVNPRTISGSNTVPSTQVADARIEYVGNGYINEAQNMGWLQRFFLNLSPM</sequence>
<proteinExistence type="inferred from homology"/>
<gene>
    <name type="primary">flgH</name>
    <name type="synonym">fla FVIII</name>
    <name type="synonym">flaY</name>
    <name type="ordered locus">b1079</name>
    <name type="ordered locus">JW5153</name>
</gene>
<organism>
    <name type="scientific">Escherichia coli (strain K12)</name>
    <dbReference type="NCBI Taxonomy" id="83333"/>
    <lineage>
        <taxon>Bacteria</taxon>
        <taxon>Pseudomonadati</taxon>
        <taxon>Pseudomonadota</taxon>
        <taxon>Gammaproteobacteria</taxon>
        <taxon>Enterobacterales</taxon>
        <taxon>Enterobacteriaceae</taxon>
        <taxon>Escherichia</taxon>
    </lineage>
</organism>
<name>FLGH_ECOLI</name>
<feature type="signal peptide" evidence="2">
    <location>
        <begin position="1"/>
        <end position="21"/>
    </location>
</feature>
<feature type="chain" id="PRO_0000009443" description="Flagellar L-ring protein">
    <location>
        <begin position="22"/>
        <end position="232"/>
    </location>
</feature>
<feature type="lipid moiety-binding region" description="N-palmitoyl cysteine" evidence="2">
    <location>
        <position position="22"/>
    </location>
</feature>
<feature type="lipid moiety-binding region" description="S-diacylglycerol cysteine" evidence="2">
    <location>
        <position position="22"/>
    </location>
</feature>